<evidence type="ECO:0000255" key="1">
    <source>
        <dbReference type="HAMAP-Rule" id="MF_00034"/>
    </source>
</evidence>
<accession>Q2GLU6</accession>
<reference key="1">
    <citation type="journal article" date="2006" name="PLoS Genet.">
        <title>Comparative genomics of emerging human ehrlichiosis agents.</title>
        <authorList>
            <person name="Dunning Hotopp J.C."/>
            <person name="Lin M."/>
            <person name="Madupu R."/>
            <person name="Crabtree J."/>
            <person name="Angiuoli S.V."/>
            <person name="Eisen J.A."/>
            <person name="Seshadri R."/>
            <person name="Ren Q."/>
            <person name="Wu M."/>
            <person name="Utterback T.R."/>
            <person name="Smith S."/>
            <person name="Lewis M."/>
            <person name="Khouri H."/>
            <person name="Zhang C."/>
            <person name="Niu H."/>
            <person name="Lin Q."/>
            <person name="Ohashi N."/>
            <person name="Zhi N."/>
            <person name="Nelson W.C."/>
            <person name="Brinkac L.M."/>
            <person name="Dodson R.J."/>
            <person name="Rosovitz M.J."/>
            <person name="Sundaram J.P."/>
            <person name="Daugherty S.C."/>
            <person name="Davidsen T."/>
            <person name="Durkin A.S."/>
            <person name="Gwinn M.L."/>
            <person name="Haft D.H."/>
            <person name="Selengut J.D."/>
            <person name="Sullivan S.A."/>
            <person name="Zafar N."/>
            <person name="Zhou L."/>
            <person name="Benahmed F."/>
            <person name="Forberger H."/>
            <person name="Halpin R."/>
            <person name="Mulligan S."/>
            <person name="Robinson J."/>
            <person name="White O."/>
            <person name="Rikihisa Y."/>
            <person name="Tettelin H."/>
        </authorList>
    </citation>
    <scope>NUCLEOTIDE SEQUENCE [LARGE SCALE GENOMIC DNA]</scope>
    <source>
        <strain>HZ</strain>
    </source>
</reference>
<keyword id="KW-0963">Cytoplasm</keyword>
<keyword id="KW-0227">DNA damage</keyword>
<keyword id="KW-0233">DNA recombination</keyword>
<keyword id="KW-0234">DNA repair</keyword>
<keyword id="KW-0238">DNA-binding</keyword>
<keyword id="KW-0255">Endonuclease</keyword>
<keyword id="KW-0378">Hydrolase</keyword>
<keyword id="KW-0460">Magnesium</keyword>
<keyword id="KW-0479">Metal-binding</keyword>
<keyword id="KW-0540">Nuclease</keyword>
<organism>
    <name type="scientific">Anaplasma phagocytophilum (strain HZ)</name>
    <dbReference type="NCBI Taxonomy" id="212042"/>
    <lineage>
        <taxon>Bacteria</taxon>
        <taxon>Pseudomonadati</taxon>
        <taxon>Pseudomonadota</taxon>
        <taxon>Alphaproteobacteria</taxon>
        <taxon>Rickettsiales</taxon>
        <taxon>Anaplasmataceae</taxon>
        <taxon>Anaplasma</taxon>
        <taxon>phagocytophilum group</taxon>
    </lineage>
</organism>
<protein>
    <recommendedName>
        <fullName evidence="1">Crossover junction endodeoxyribonuclease RuvC</fullName>
        <ecNumber evidence="1">3.1.21.10</ecNumber>
    </recommendedName>
    <alternativeName>
        <fullName evidence="1">Holliday junction nuclease RuvC</fullName>
    </alternativeName>
    <alternativeName>
        <fullName evidence="1">Holliday junction resolvase RuvC</fullName>
    </alternativeName>
</protein>
<dbReference type="EC" id="3.1.21.10" evidence="1"/>
<dbReference type="EMBL" id="CP000235">
    <property type="protein sequence ID" value="ABD44169.1"/>
    <property type="molecule type" value="Genomic_DNA"/>
</dbReference>
<dbReference type="RefSeq" id="WP_011450181.1">
    <property type="nucleotide sequence ID" value="NC_007797.1"/>
</dbReference>
<dbReference type="SMR" id="Q2GLU6"/>
<dbReference type="STRING" id="212042.APH_0018"/>
<dbReference type="PaxDb" id="212042-APH_0018"/>
<dbReference type="EnsemblBacteria" id="ABD44169">
    <property type="protein sequence ID" value="ABD44169"/>
    <property type="gene ID" value="APH_0018"/>
</dbReference>
<dbReference type="GeneID" id="92747723"/>
<dbReference type="KEGG" id="aph:APH_0018"/>
<dbReference type="eggNOG" id="COG0817">
    <property type="taxonomic scope" value="Bacteria"/>
</dbReference>
<dbReference type="HOGENOM" id="CLU_091257_1_0_5"/>
<dbReference type="Proteomes" id="UP000001943">
    <property type="component" value="Chromosome"/>
</dbReference>
<dbReference type="GO" id="GO:0005737">
    <property type="term" value="C:cytoplasm"/>
    <property type="evidence" value="ECO:0007669"/>
    <property type="project" value="UniProtKB-SubCell"/>
</dbReference>
<dbReference type="GO" id="GO:0048476">
    <property type="term" value="C:Holliday junction resolvase complex"/>
    <property type="evidence" value="ECO:0007669"/>
    <property type="project" value="UniProtKB-UniRule"/>
</dbReference>
<dbReference type="GO" id="GO:0008821">
    <property type="term" value="F:crossover junction DNA endonuclease activity"/>
    <property type="evidence" value="ECO:0007669"/>
    <property type="project" value="UniProtKB-UniRule"/>
</dbReference>
<dbReference type="GO" id="GO:0003677">
    <property type="term" value="F:DNA binding"/>
    <property type="evidence" value="ECO:0007669"/>
    <property type="project" value="UniProtKB-KW"/>
</dbReference>
<dbReference type="GO" id="GO:0000287">
    <property type="term" value="F:magnesium ion binding"/>
    <property type="evidence" value="ECO:0007669"/>
    <property type="project" value="UniProtKB-UniRule"/>
</dbReference>
<dbReference type="GO" id="GO:0006310">
    <property type="term" value="P:DNA recombination"/>
    <property type="evidence" value="ECO:0007669"/>
    <property type="project" value="UniProtKB-UniRule"/>
</dbReference>
<dbReference type="GO" id="GO:0006281">
    <property type="term" value="P:DNA repair"/>
    <property type="evidence" value="ECO:0007669"/>
    <property type="project" value="UniProtKB-UniRule"/>
</dbReference>
<dbReference type="CDD" id="cd16962">
    <property type="entry name" value="RuvC"/>
    <property type="match status" value="1"/>
</dbReference>
<dbReference type="FunFam" id="3.30.420.10:FF:000002">
    <property type="entry name" value="Crossover junction endodeoxyribonuclease RuvC"/>
    <property type="match status" value="1"/>
</dbReference>
<dbReference type="Gene3D" id="3.30.420.10">
    <property type="entry name" value="Ribonuclease H-like superfamily/Ribonuclease H"/>
    <property type="match status" value="1"/>
</dbReference>
<dbReference type="HAMAP" id="MF_00034">
    <property type="entry name" value="RuvC"/>
    <property type="match status" value="1"/>
</dbReference>
<dbReference type="InterPro" id="IPR012337">
    <property type="entry name" value="RNaseH-like_sf"/>
</dbReference>
<dbReference type="InterPro" id="IPR036397">
    <property type="entry name" value="RNaseH_sf"/>
</dbReference>
<dbReference type="InterPro" id="IPR002176">
    <property type="entry name" value="X-over_junc_endoDNase_RuvC"/>
</dbReference>
<dbReference type="NCBIfam" id="TIGR00228">
    <property type="entry name" value="ruvC"/>
    <property type="match status" value="1"/>
</dbReference>
<dbReference type="PANTHER" id="PTHR30194">
    <property type="entry name" value="CROSSOVER JUNCTION ENDODEOXYRIBONUCLEASE RUVC"/>
    <property type="match status" value="1"/>
</dbReference>
<dbReference type="PANTHER" id="PTHR30194:SF3">
    <property type="entry name" value="CROSSOVER JUNCTION ENDODEOXYRIBONUCLEASE RUVC"/>
    <property type="match status" value="1"/>
</dbReference>
<dbReference type="Pfam" id="PF02075">
    <property type="entry name" value="RuvC"/>
    <property type="match status" value="1"/>
</dbReference>
<dbReference type="PRINTS" id="PR00696">
    <property type="entry name" value="RSOLVASERUVC"/>
</dbReference>
<dbReference type="SUPFAM" id="SSF53098">
    <property type="entry name" value="Ribonuclease H-like"/>
    <property type="match status" value="1"/>
</dbReference>
<comment type="function">
    <text evidence="1">The RuvA-RuvB-RuvC complex processes Holliday junction (HJ) DNA during genetic recombination and DNA repair. Endonuclease that resolves HJ intermediates. Cleaves cruciform DNA by making single-stranded nicks across the HJ at symmetrical positions within the homologous arms, yielding a 5'-phosphate and a 3'-hydroxyl group; requires a central core of homology in the junction. The consensus cleavage sequence is 5'-(A/T)TT(C/G)-3'. Cleavage occurs on the 3'-side of the TT dinucleotide at the point of strand exchange. HJ branch migration catalyzed by RuvA-RuvB allows RuvC to scan DNA until it finds its consensus sequence, where it cleaves and resolves the cruciform DNA.</text>
</comment>
<comment type="catalytic activity">
    <reaction evidence="1">
        <text>Endonucleolytic cleavage at a junction such as a reciprocal single-stranded crossover between two homologous DNA duplexes (Holliday junction).</text>
        <dbReference type="EC" id="3.1.21.10"/>
    </reaction>
</comment>
<comment type="cofactor">
    <cofactor evidence="1">
        <name>Mg(2+)</name>
        <dbReference type="ChEBI" id="CHEBI:18420"/>
    </cofactor>
    <text evidence="1">Binds 2 Mg(2+) ion per subunit.</text>
</comment>
<comment type="subunit">
    <text evidence="1">Homodimer which binds Holliday junction (HJ) DNA. The HJ becomes 2-fold symmetrical on binding to RuvC with unstacked arms; it has a different conformation from HJ DNA in complex with RuvA. In the full resolvosome a probable DNA-RuvA(4)-RuvB(12)-RuvC(2) complex forms which resolves the HJ.</text>
</comment>
<comment type="subcellular location">
    <subcellularLocation>
        <location evidence="1">Cytoplasm</location>
    </subcellularLocation>
</comment>
<comment type="similarity">
    <text evidence="1">Belongs to the RuvC family.</text>
</comment>
<sequence length="163" mass="17327">MLVFGLDPGLNYTGWAVVLKEPSGSLSLLDTGTICTTSCSDLNDKLFCIFSGLSAIIQKFSVSVASIENVFVNLNPKASMFLCYARAASLLACLSSNVKIFEYSPTKIKKCVFGNGRASKEQIAFVVRSSLGLSEDASFSSHASDAIAAALCHIFSSGNRYGI</sequence>
<feature type="chain" id="PRO_1000002714" description="Crossover junction endodeoxyribonuclease RuvC">
    <location>
        <begin position="1"/>
        <end position="163"/>
    </location>
</feature>
<feature type="active site" evidence="1">
    <location>
        <position position="7"/>
    </location>
</feature>
<feature type="active site" evidence="1">
    <location>
        <position position="68"/>
    </location>
</feature>
<feature type="active site" evidence="1">
    <location>
        <position position="142"/>
    </location>
</feature>
<feature type="binding site" evidence="1">
    <location>
        <position position="7"/>
    </location>
    <ligand>
        <name>Mg(2+)</name>
        <dbReference type="ChEBI" id="CHEBI:18420"/>
        <label>1</label>
    </ligand>
</feature>
<feature type="binding site" evidence="1">
    <location>
        <position position="68"/>
    </location>
    <ligand>
        <name>Mg(2+)</name>
        <dbReference type="ChEBI" id="CHEBI:18420"/>
        <label>2</label>
    </ligand>
</feature>
<feature type="binding site" evidence="1">
    <location>
        <position position="142"/>
    </location>
    <ligand>
        <name>Mg(2+)</name>
        <dbReference type="ChEBI" id="CHEBI:18420"/>
        <label>1</label>
    </ligand>
</feature>
<gene>
    <name evidence="1" type="primary">ruvC</name>
    <name type="ordered locus">APH_0018</name>
</gene>
<name>RUVC_ANAPZ</name>
<proteinExistence type="inferred from homology"/>